<dbReference type="EMBL" id="AL009126">
    <property type="protein sequence ID" value="CAB14049.1"/>
    <property type="molecule type" value="Genomic_DNA"/>
</dbReference>
<dbReference type="PIR" id="D69932">
    <property type="entry name" value="D69932"/>
</dbReference>
<dbReference type="RefSeq" id="NP_390014.1">
    <property type="nucleotide sequence ID" value="NC_000964.3"/>
</dbReference>
<dbReference type="SMR" id="O31972"/>
<dbReference type="FunCoup" id="O31972">
    <property type="interactions" value="3"/>
</dbReference>
<dbReference type="STRING" id="224308.BSU21310"/>
<dbReference type="PaxDb" id="224308-BSU21310"/>
<dbReference type="EnsemblBacteria" id="CAB14049">
    <property type="protein sequence ID" value="CAB14049"/>
    <property type="gene ID" value="BSU_21310"/>
</dbReference>
<dbReference type="GeneID" id="939141"/>
<dbReference type="KEGG" id="bsu:BSU21310"/>
<dbReference type="PATRIC" id="fig|224308.179.peg.2326"/>
<dbReference type="InParanoid" id="O31972"/>
<dbReference type="OrthoDB" id="9856874at2"/>
<dbReference type="BioCyc" id="BSUB:BSU21310-MONOMER"/>
<dbReference type="Proteomes" id="UP000001570">
    <property type="component" value="Chromosome"/>
</dbReference>
<proteinExistence type="predicted"/>
<feature type="chain" id="PRO_0000049673" description="Uncharacterized protein YozP">
    <location>
        <begin position="1"/>
        <end position="109"/>
    </location>
</feature>
<accession>O31972</accession>
<name>YOZP_BACSU</name>
<protein>
    <recommendedName>
        <fullName>Uncharacterized protein YozP</fullName>
    </recommendedName>
</protein>
<organism>
    <name type="scientific">Bacillus subtilis (strain 168)</name>
    <dbReference type="NCBI Taxonomy" id="224308"/>
    <lineage>
        <taxon>Bacteria</taxon>
        <taxon>Bacillati</taxon>
        <taxon>Bacillota</taxon>
        <taxon>Bacilli</taxon>
        <taxon>Bacillales</taxon>
        <taxon>Bacillaceae</taxon>
        <taxon>Bacillus</taxon>
    </lineage>
</organism>
<keyword id="KW-1185">Reference proteome</keyword>
<gene>
    <name type="primary">yozP</name>
    <name type="ordered locus">BSU21310</name>
</gene>
<sequence length="109" mass="12361">MKVIHGIRVYEKGEKVFFETEMPSIPEYMYSKFGWKIIEIDGKNYWAPMEEEEYIHIVAKYLGISPSEVDLNLVHCGTMGDNGCFGDCTGNRFCKRWSTGDSTGCICGA</sequence>
<reference key="1">
    <citation type="journal article" date="1997" name="Nature">
        <title>The complete genome sequence of the Gram-positive bacterium Bacillus subtilis.</title>
        <authorList>
            <person name="Kunst F."/>
            <person name="Ogasawara N."/>
            <person name="Moszer I."/>
            <person name="Albertini A.M."/>
            <person name="Alloni G."/>
            <person name="Azevedo V."/>
            <person name="Bertero M.G."/>
            <person name="Bessieres P."/>
            <person name="Bolotin A."/>
            <person name="Borchert S."/>
            <person name="Borriss R."/>
            <person name="Boursier L."/>
            <person name="Brans A."/>
            <person name="Braun M."/>
            <person name="Brignell S.C."/>
            <person name="Bron S."/>
            <person name="Brouillet S."/>
            <person name="Bruschi C.V."/>
            <person name="Caldwell B."/>
            <person name="Capuano V."/>
            <person name="Carter N.M."/>
            <person name="Choi S.-K."/>
            <person name="Codani J.-J."/>
            <person name="Connerton I.F."/>
            <person name="Cummings N.J."/>
            <person name="Daniel R.A."/>
            <person name="Denizot F."/>
            <person name="Devine K.M."/>
            <person name="Duesterhoeft A."/>
            <person name="Ehrlich S.D."/>
            <person name="Emmerson P.T."/>
            <person name="Entian K.-D."/>
            <person name="Errington J."/>
            <person name="Fabret C."/>
            <person name="Ferrari E."/>
            <person name="Foulger D."/>
            <person name="Fritz C."/>
            <person name="Fujita M."/>
            <person name="Fujita Y."/>
            <person name="Fuma S."/>
            <person name="Galizzi A."/>
            <person name="Galleron N."/>
            <person name="Ghim S.-Y."/>
            <person name="Glaser P."/>
            <person name="Goffeau A."/>
            <person name="Golightly E.J."/>
            <person name="Grandi G."/>
            <person name="Guiseppi G."/>
            <person name="Guy B.J."/>
            <person name="Haga K."/>
            <person name="Haiech J."/>
            <person name="Harwood C.R."/>
            <person name="Henaut A."/>
            <person name="Hilbert H."/>
            <person name="Holsappel S."/>
            <person name="Hosono S."/>
            <person name="Hullo M.-F."/>
            <person name="Itaya M."/>
            <person name="Jones L.-M."/>
            <person name="Joris B."/>
            <person name="Karamata D."/>
            <person name="Kasahara Y."/>
            <person name="Klaerr-Blanchard M."/>
            <person name="Klein C."/>
            <person name="Kobayashi Y."/>
            <person name="Koetter P."/>
            <person name="Koningstein G."/>
            <person name="Krogh S."/>
            <person name="Kumano M."/>
            <person name="Kurita K."/>
            <person name="Lapidus A."/>
            <person name="Lardinois S."/>
            <person name="Lauber J."/>
            <person name="Lazarevic V."/>
            <person name="Lee S.-M."/>
            <person name="Levine A."/>
            <person name="Liu H."/>
            <person name="Masuda S."/>
            <person name="Mauel C."/>
            <person name="Medigue C."/>
            <person name="Medina N."/>
            <person name="Mellado R.P."/>
            <person name="Mizuno M."/>
            <person name="Moestl D."/>
            <person name="Nakai S."/>
            <person name="Noback M."/>
            <person name="Noone D."/>
            <person name="O'Reilly M."/>
            <person name="Ogawa K."/>
            <person name="Ogiwara A."/>
            <person name="Oudega B."/>
            <person name="Park S.-H."/>
            <person name="Parro V."/>
            <person name="Pohl T.M."/>
            <person name="Portetelle D."/>
            <person name="Porwollik S."/>
            <person name="Prescott A.M."/>
            <person name="Presecan E."/>
            <person name="Pujic P."/>
            <person name="Purnelle B."/>
            <person name="Rapoport G."/>
            <person name="Rey M."/>
            <person name="Reynolds S."/>
            <person name="Rieger M."/>
            <person name="Rivolta C."/>
            <person name="Rocha E."/>
            <person name="Roche B."/>
            <person name="Rose M."/>
            <person name="Sadaie Y."/>
            <person name="Sato T."/>
            <person name="Scanlan E."/>
            <person name="Schleich S."/>
            <person name="Schroeter R."/>
            <person name="Scoffone F."/>
            <person name="Sekiguchi J."/>
            <person name="Sekowska A."/>
            <person name="Seror S.J."/>
            <person name="Serror P."/>
            <person name="Shin B.-S."/>
            <person name="Soldo B."/>
            <person name="Sorokin A."/>
            <person name="Tacconi E."/>
            <person name="Takagi T."/>
            <person name="Takahashi H."/>
            <person name="Takemaru K."/>
            <person name="Takeuchi M."/>
            <person name="Tamakoshi A."/>
            <person name="Tanaka T."/>
            <person name="Terpstra P."/>
            <person name="Tognoni A."/>
            <person name="Tosato V."/>
            <person name="Uchiyama S."/>
            <person name="Vandenbol M."/>
            <person name="Vannier F."/>
            <person name="Vassarotti A."/>
            <person name="Viari A."/>
            <person name="Wambutt R."/>
            <person name="Wedler E."/>
            <person name="Wedler H."/>
            <person name="Weitzenegger T."/>
            <person name="Winters P."/>
            <person name="Wipat A."/>
            <person name="Yamamoto H."/>
            <person name="Yamane K."/>
            <person name="Yasumoto K."/>
            <person name="Yata K."/>
            <person name="Yoshida K."/>
            <person name="Yoshikawa H.-F."/>
            <person name="Zumstein E."/>
            <person name="Yoshikawa H."/>
            <person name="Danchin A."/>
        </authorList>
    </citation>
    <scope>NUCLEOTIDE SEQUENCE [LARGE SCALE GENOMIC DNA]</scope>
    <source>
        <strain>168</strain>
    </source>
</reference>